<protein>
    <recommendedName>
        <fullName evidence="1">Non-structural protein 1</fullName>
        <shortName evidence="1">NS1</shortName>
    </recommendedName>
    <alternativeName>
        <fullName evidence="1">NS1A</fullName>
    </alternativeName>
</protein>
<name>NS1_I000X</name>
<gene>
    <name evidence="1" type="primary">NS</name>
</gene>
<accession>Q0PDM0</accession>
<sequence length="230" mass="25849">MDPNTVSSFQVDCFLWHVRKRVADQELGDAPFLDRLRRDQKSLRGRGSTLGLDIKTATRAGKQIVERILKEESDEALKMTMASVPASRYLTDMTLEELSRDWSMLIPKQKVAGPLCIRMDQAIMDKNIILKANFSVIFDRLETLILLRAFTEEGAIVGEISPLPSLPGHTAEDVKNAVGVLIGGLEWNDNTVRVSETLQRFAWRSSNENGRPPLTPKQKREMAGTIRSEV</sequence>
<dbReference type="EMBL" id="DQ874880">
    <property type="protein sequence ID" value="ABH05857.1"/>
    <property type="molecule type" value="Viral_cRNA"/>
</dbReference>
<dbReference type="SMR" id="Q0PDM0"/>
<dbReference type="GO" id="GO:0030430">
    <property type="term" value="C:host cell cytoplasm"/>
    <property type="evidence" value="ECO:0007669"/>
    <property type="project" value="UniProtKB-SubCell"/>
</dbReference>
<dbReference type="GO" id="GO:0042025">
    <property type="term" value="C:host cell nucleus"/>
    <property type="evidence" value="ECO:0007669"/>
    <property type="project" value="UniProtKB-SubCell"/>
</dbReference>
<dbReference type="GO" id="GO:0030291">
    <property type="term" value="F:protein serine/threonine kinase inhibitor activity"/>
    <property type="evidence" value="ECO:0007669"/>
    <property type="project" value="UniProtKB-KW"/>
</dbReference>
<dbReference type="GO" id="GO:0003723">
    <property type="term" value="F:RNA binding"/>
    <property type="evidence" value="ECO:0007669"/>
    <property type="project" value="UniProtKB-KW"/>
</dbReference>
<dbReference type="GO" id="GO:0039540">
    <property type="term" value="P:symbiont-mediated suppression of host cytoplasmic pattern recognition receptor signaling pathway via inhibition of RIG-I activity"/>
    <property type="evidence" value="ECO:0007669"/>
    <property type="project" value="UniProtKB-KW"/>
</dbReference>
<dbReference type="GO" id="GO:0039657">
    <property type="term" value="P:symbiont-mediated suppression of host gene expression"/>
    <property type="evidence" value="ECO:0007669"/>
    <property type="project" value="UniProtKB-KW"/>
</dbReference>
<dbReference type="GO" id="GO:0039524">
    <property type="term" value="P:symbiont-mediated suppression of host mRNA processing"/>
    <property type="evidence" value="ECO:0007669"/>
    <property type="project" value="UniProtKB-KW"/>
</dbReference>
<dbReference type="GO" id="GO:0039580">
    <property type="term" value="P:symbiont-mediated suppression of host PKR/eIFalpha signaling"/>
    <property type="evidence" value="ECO:0007669"/>
    <property type="project" value="UniProtKB-KW"/>
</dbReference>
<dbReference type="GO" id="GO:0039502">
    <property type="term" value="P:symbiont-mediated suppression of host type I interferon-mediated signaling pathway"/>
    <property type="evidence" value="ECO:0007669"/>
    <property type="project" value="UniProtKB-KW"/>
</dbReference>
<dbReference type="FunFam" id="1.10.287.10:FF:000001">
    <property type="entry name" value="Non-structural protein 1"/>
    <property type="match status" value="1"/>
</dbReference>
<dbReference type="FunFam" id="3.30.420.330:FF:000001">
    <property type="entry name" value="Non-structural protein 1"/>
    <property type="match status" value="1"/>
</dbReference>
<dbReference type="Gene3D" id="3.30.420.330">
    <property type="entry name" value="Influenza virus non-structural protein, effector domain"/>
    <property type="match status" value="1"/>
</dbReference>
<dbReference type="Gene3D" id="1.10.287.10">
    <property type="entry name" value="S15/NS1, RNA-binding"/>
    <property type="match status" value="1"/>
</dbReference>
<dbReference type="HAMAP" id="MF_04066">
    <property type="entry name" value="INFV_NS1"/>
    <property type="match status" value="1"/>
</dbReference>
<dbReference type="InterPro" id="IPR004208">
    <property type="entry name" value="NS1"/>
</dbReference>
<dbReference type="InterPro" id="IPR000256">
    <property type="entry name" value="NS1A"/>
</dbReference>
<dbReference type="InterPro" id="IPR038064">
    <property type="entry name" value="NS1A_effect_dom-like_sf"/>
</dbReference>
<dbReference type="InterPro" id="IPR009068">
    <property type="entry name" value="uS15_NS1_RNA-bd_sf"/>
</dbReference>
<dbReference type="Pfam" id="PF00600">
    <property type="entry name" value="Flu_NS1"/>
    <property type="match status" value="1"/>
</dbReference>
<dbReference type="SUPFAM" id="SSF143021">
    <property type="entry name" value="Ns1 effector domain-like"/>
    <property type="match status" value="1"/>
</dbReference>
<dbReference type="SUPFAM" id="SSF47060">
    <property type="entry name" value="S15/NS1 RNA-binding domain"/>
    <property type="match status" value="1"/>
</dbReference>
<proteinExistence type="inferred from homology"/>
<organismHost>
    <name type="scientific">Aves</name>
    <dbReference type="NCBI Taxonomy" id="8782"/>
</organismHost>
<organismHost>
    <name type="scientific">Cetacea</name>
    <name type="common">whales</name>
    <dbReference type="NCBI Taxonomy" id="9721"/>
</organismHost>
<organismHost>
    <name type="scientific">Homo sapiens</name>
    <name type="common">Human</name>
    <dbReference type="NCBI Taxonomy" id="9606"/>
</organismHost>
<organismHost>
    <name type="scientific">Phocidae</name>
    <name type="common">true seals</name>
    <dbReference type="NCBI Taxonomy" id="9709"/>
</organismHost>
<organismHost>
    <name type="scientific">Sus scrofa</name>
    <name type="common">Pig</name>
    <dbReference type="NCBI Taxonomy" id="9823"/>
</organismHost>
<organism>
    <name type="scientific">Influenza A virus (strain A/X-31 H3N2)</name>
    <dbReference type="NCBI Taxonomy" id="132504"/>
    <lineage>
        <taxon>Viruses</taxon>
        <taxon>Riboviria</taxon>
        <taxon>Orthornavirae</taxon>
        <taxon>Negarnaviricota</taxon>
        <taxon>Polyploviricotina</taxon>
        <taxon>Insthoviricetes</taxon>
        <taxon>Articulavirales</taxon>
        <taxon>Orthomyxoviridae</taxon>
        <taxon>Alphainfluenzavirus</taxon>
        <taxon>Alphainfluenzavirus influenzae</taxon>
        <taxon>Influenza A virus</taxon>
    </lineage>
</organism>
<feature type="chain" id="PRO_0000324236" description="Non-structural protein 1">
    <location>
        <begin position="1"/>
        <end position="230"/>
    </location>
</feature>
<feature type="region of interest" description="RNA-binding and homodimerization" evidence="1">
    <location>
        <begin position="1"/>
        <end position="73"/>
    </location>
</feature>
<feature type="region of interest" description="CPSF4-binding" evidence="1">
    <location>
        <begin position="180"/>
        <end position="215"/>
    </location>
</feature>
<feature type="region of interest" description="Disordered" evidence="2">
    <location>
        <begin position="205"/>
        <end position="230"/>
    </location>
</feature>
<feature type="region of interest" description="PABPN1-binding" evidence="1">
    <location>
        <begin position="223"/>
        <end position="230"/>
    </location>
</feature>
<feature type="short sequence motif" description="Nuclear localization signal" evidence="1">
    <location>
        <begin position="34"/>
        <end position="38"/>
    </location>
</feature>
<feature type="short sequence motif" description="Nuclear export signal" evidence="1">
    <location>
        <begin position="137"/>
        <end position="146"/>
    </location>
</feature>
<feature type="compositionally biased region" description="Basic and acidic residues" evidence="2">
    <location>
        <begin position="218"/>
        <end position="230"/>
    </location>
</feature>
<comment type="function">
    <text evidence="1">Inhibits post-transcriptional processing of cellular pre-mRNA, by binding and inhibiting two cellular proteins that are required for the 3'-end processing of cellular pre-mRNAs: the 30 kDa cleavage and polyadenylation specificity factor/CPSF4 and the poly(A)-binding protein 2/PABPN1. In turn, unprocessed 3' end pre-mRNAs accumulate in the host nucleus and are no longer exported to the cytoplasm. Cellular protein synthesis is thereby shut off very early after virus infection. Viral protein synthesis is not affected by the inhibition of the cellular 3' end processing machinery because the poly(A) tails of viral mRNAs are produced by the viral polymerase through a stuttering mechanism. Prevents the establishment of the cellular antiviral state by inhibiting TRIM25-mediated RIGI ubiquitination, which normally triggers the antiviral transduction signal that leads to the activation of type I IFN genes by transcription factors IRF3 and IRF7. Also binds poly(A) and U6 snRNA. Inhibits the integrated stress response (ISR) in the infected cell by blocking dsRNA binding by EIF2AK2/PKR and further phosphorylation of EIF2S1/EIF-2ALPHA. Stress granule formation is thus inhibited, which allows protein synthesis and viral replication.</text>
</comment>
<comment type="subunit">
    <text evidence="1">Homodimer. Interacts with host TRIM25 (via coiled coil); this interaction specifically inhibits TRIM25 multimerization and TRIM25-mediated RIGI CARD ubiquitination. Interacts with human EIF2AK2/PKR, CPSF4, IVNS1ABP and PABPN1.</text>
</comment>
<comment type="subcellular location">
    <subcellularLocation>
        <location evidence="1">Host nucleus</location>
    </subcellularLocation>
    <subcellularLocation>
        <location evidence="1">Host cytoplasm</location>
    </subcellularLocation>
    <text evidence="1">In uninfected, transfected cells, NS1 is localized in the nucleus. Only in virus infected cells, the nuclear export signal is unveiled, presumably by a viral protein, and a fraction of NS1 is exported in the cytoplasm.</text>
</comment>
<comment type="alternative products">
    <event type="alternative splicing"/>
    <isoform>
        <id>Q0PDM0-1</id>
        <name>NS1</name>
        <sequence type="displayed"/>
    </isoform>
    <isoform>
        <id>Q76MT9-1</id>
        <name>NEP</name>
        <name>NS2</name>
        <sequence type="external"/>
    </isoform>
</comment>
<comment type="domain">
    <text evidence="1">The dsRNA-binding region is required for suppression of RNA silencing.</text>
</comment>
<comment type="PTM">
    <text evidence="1">Upon interferon induction, ISGylated via host HERC5; this results in the impairment of NS1 interaction with RNA targets due to its inability to form homodimers and to interact with host EIF2AK2/PKR.</text>
</comment>
<comment type="similarity">
    <text evidence="1">Belongs to the influenza A viruses NS1 family.</text>
</comment>
<reference key="1">
    <citation type="submission" date="2006-08" db="EMBL/GenBank/DDBJ databases">
        <title>Identification of mutations in the cold-adapted X-31 ca influenza vaccine strain.</title>
        <authorList>
            <person name="Lee K.-H."/>
            <person name="Kim Y.H."/>
            <person name="Ha S.-H."/>
            <person name="Kim H.A."/>
            <person name="Seo S.-U."/>
            <person name="Seong B.L."/>
        </authorList>
    </citation>
    <scope>NUCLEOTIDE SEQUENCE [GENOMIC RNA]</scope>
</reference>
<evidence type="ECO:0000255" key="1">
    <source>
        <dbReference type="HAMAP-Rule" id="MF_04066"/>
    </source>
</evidence>
<evidence type="ECO:0000256" key="2">
    <source>
        <dbReference type="SAM" id="MobiDB-lite"/>
    </source>
</evidence>
<keyword id="KW-0025">Alternative splicing</keyword>
<keyword id="KW-1262">Eukaryotic host gene expression shutoff by virus</keyword>
<keyword id="KW-1035">Host cytoplasm</keyword>
<keyword id="KW-1190">Host gene expression shutoff by virus</keyword>
<keyword id="KW-1192">Host mRNA suppression by virus</keyword>
<keyword id="KW-1048">Host nucleus</keyword>
<keyword id="KW-0945">Host-virus interaction</keyword>
<keyword id="KW-1090">Inhibition of host innate immune response by virus</keyword>
<keyword id="KW-1114">Inhibition of host interferon signaling pathway by virus</keyword>
<keyword id="KW-1102">Inhibition of host PKR by virus</keyword>
<keyword id="KW-1103">Inhibition of host pre-mRNA processing by virus</keyword>
<keyword id="KW-1088">Inhibition of host RIG-I by virus</keyword>
<keyword id="KW-1113">Inhibition of host RLR pathway by virus</keyword>
<keyword id="KW-0922">Interferon antiviral system evasion</keyword>
<keyword id="KW-0694">RNA-binding</keyword>
<keyword id="KW-0832">Ubl conjugation</keyword>
<keyword id="KW-0899">Viral immunoevasion</keyword>